<dbReference type="EMBL" id="Y12538">
    <property type="protein sequence ID" value="CAA73137.1"/>
    <property type="molecule type" value="mRNA"/>
</dbReference>
<dbReference type="SMR" id="Q9WUV6"/>
<dbReference type="FunCoup" id="Q9WUV6">
    <property type="interactions" value="3"/>
</dbReference>
<dbReference type="STRING" id="10116.ENSRNOP00000011555"/>
<dbReference type="iPTMnet" id="Q9WUV6"/>
<dbReference type="PhosphoSitePlus" id="Q9WUV6"/>
<dbReference type="PaxDb" id="10116-ENSRNOP00000011555"/>
<dbReference type="UCSC" id="RGD:2271">
    <property type="organism name" value="rat"/>
</dbReference>
<dbReference type="AGR" id="RGD:2271"/>
<dbReference type="RGD" id="2271">
    <property type="gene designation" value="Capza3"/>
</dbReference>
<dbReference type="eggNOG" id="KOG0836">
    <property type="taxonomic scope" value="Eukaryota"/>
</dbReference>
<dbReference type="InParanoid" id="Q9WUV6"/>
<dbReference type="PhylomeDB" id="Q9WUV6"/>
<dbReference type="Reactome" id="R-RNO-2132295">
    <property type="pathway name" value="MHC class II antigen presentation"/>
</dbReference>
<dbReference type="Reactome" id="R-RNO-3371497">
    <property type="pathway name" value="HSP90 chaperone cycle for steroid hormone receptors (SHR) in the presence of ligand"/>
</dbReference>
<dbReference type="Reactome" id="R-RNO-6807878">
    <property type="pathway name" value="COPI-mediated anterograde transport"/>
</dbReference>
<dbReference type="Reactome" id="R-RNO-6811436">
    <property type="pathway name" value="COPI-independent Golgi-to-ER retrograde traffic"/>
</dbReference>
<dbReference type="PRO" id="PR:Q9WUV6"/>
<dbReference type="Proteomes" id="UP000002494">
    <property type="component" value="Unplaced"/>
</dbReference>
<dbReference type="GO" id="GO:0001669">
    <property type="term" value="C:acrosomal vesicle"/>
    <property type="evidence" value="ECO:0000314"/>
    <property type="project" value="RGD"/>
</dbReference>
<dbReference type="GO" id="GO:0030863">
    <property type="term" value="C:cortical cytoskeleton"/>
    <property type="evidence" value="ECO:0000266"/>
    <property type="project" value="RGD"/>
</dbReference>
<dbReference type="GO" id="GO:0008290">
    <property type="term" value="C:F-actin capping protein complex"/>
    <property type="evidence" value="ECO:0000318"/>
    <property type="project" value="GO_Central"/>
</dbReference>
<dbReference type="GO" id="GO:0016020">
    <property type="term" value="C:membrane"/>
    <property type="evidence" value="ECO:0000266"/>
    <property type="project" value="RGD"/>
</dbReference>
<dbReference type="GO" id="GO:0051015">
    <property type="term" value="F:actin filament binding"/>
    <property type="evidence" value="ECO:0000318"/>
    <property type="project" value="GO_Central"/>
</dbReference>
<dbReference type="GO" id="GO:0030036">
    <property type="term" value="P:actin cytoskeleton organization"/>
    <property type="evidence" value="ECO:0000318"/>
    <property type="project" value="GO_Central"/>
</dbReference>
<dbReference type="GO" id="GO:0051016">
    <property type="term" value="P:barbed-end actin filament capping"/>
    <property type="evidence" value="ECO:0000318"/>
    <property type="project" value="GO_Central"/>
</dbReference>
<dbReference type="GO" id="GO:0007286">
    <property type="term" value="P:spermatid development"/>
    <property type="evidence" value="ECO:0000270"/>
    <property type="project" value="RGD"/>
</dbReference>
<dbReference type="FunFam" id="3.30.1140.60:FF:000002">
    <property type="entry name" value="F-actin-capping protein subunit alpha"/>
    <property type="match status" value="1"/>
</dbReference>
<dbReference type="FunFam" id="3.90.1150.210:FF:000003">
    <property type="entry name" value="F-actin-capping protein subunit alpha"/>
    <property type="match status" value="1"/>
</dbReference>
<dbReference type="Gene3D" id="3.30.1140.60">
    <property type="entry name" value="F-actin capping protein, alpha subunit"/>
    <property type="match status" value="1"/>
</dbReference>
<dbReference type="Gene3D" id="3.90.1150.210">
    <property type="entry name" value="F-actin capping protein, beta subunit"/>
    <property type="match status" value="1"/>
</dbReference>
<dbReference type="InterPro" id="IPR002189">
    <property type="entry name" value="CapZ_alpha"/>
</dbReference>
<dbReference type="InterPro" id="IPR037282">
    <property type="entry name" value="CapZ_alpha/beta"/>
</dbReference>
<dbReference type="InterPro" id="IPR042276">
    <property type="entry name" value="CapZ_alpha/beta_2"/>
</dbReference>
<dbReference type="InterPro" id="IPR042489">
    <property type="entry name" value="CapZ_alpha_1"/>
</dbReference>
<dbReference type="InterPro" id="IPR017865">
    <property type="entry name" value="F-actin_cap_asu_CS"/>
</dbReference>
<dbReference type="PANTHER" id="PTHR10653">
    <property type="entry name" value="F-ACTIN-CAPPING PROTEIN SUBUNIT ALPHA"/>
    <property type="match status" value="1"/>
</dbReference>
<dbReference type="PANTHER" id="PTHR10653:SF6">
    <property type="entry name" value="F-ACTIN-CAPPING PROTEIN SUBUNIT ALPHA-3"/>
    <property type="match status" value="1"/>
</dbReference>
<dbReference type="Pfam" id="PF01267">
    <property type="entry name" value="F-actin_cap_A"/>
    <property type="match status" value="1"/>
</dbReference>
<dbReference type="PRINTS" id="PR00191">
    <property type="entry name" value="FACTINCAPA"/>
</dbReference>
<dbReference type="SUPFAM" id="SSF90096">
    <property type="entry name" value="Subunits of heterodimeric actin filament capping protein Capz"/>
    <property type="match status" value="1"/>
</dbReference>
<dbReference type="PROSITE" id="PS00748">
    <property type="entry name" value="F_ACTIN_CAPPING_A_1"/>
    <property type="match status" value="1"/>
</dbReference>
<dbReference type="PROSITE" id="PS00749">
    <property type="entry name" value="F_ACTIN_CAPPING_A_2"/>
    <property type="match status" value="1"/>
</dbReference>
<proteinExistence type="evidence at protein level"/>
<evidence type="ECO:0000250" key="1"/>
<evidence type="ECO:0000250" key="2">
    <source>
        <dbReference type="UniProtKB" id="A0PFK5"/>
    </source>
</evidence>
<evidence type="ECO:0000305" key="3"/>
<evidence type="ECO:0007744" key="4">
    <source>
    </source>
</evidence>
<protein>
    <recommendedName>
        <fullName>F-actin-capping protein subunit alpha-3</fullName>
    </recommendedName>
    <alternativeName>
        <fullName>CapZ alpha-3</fullName>
    </alternativeName>
</protein>
<feature type="chain" id="PRO_0000208633" description="F-actin-capping protein subunit alpha-3">
    <location>
        <begin position="1"/>
        <end position="299"/>
    </location>
</feature>
<feature type="modified residue" description="Phosphoserine" evidence="4">
    <location>
        <position position="2"/>
    </location>
</feature>
<feature type="modified residue" description="Phosphoserine" evidence="4">
    <location>
        <position position="290"/>
    </location>
</feature>
<accession>Q9WUV6</accession>
<gene>
    <name type="primary">Capza3</name>
</gene>
<sequence>MSLSVLSRQDKEKVIHRLLIQAPPGEFVNAFDDLCLLIRDEKLMHHQGECAGHQHCQKYCVPLCIDGNPVLLSHHNVMGDFRFFDYQSKLSFRFDLLQNQLRDIQSHGIIRNENEYLRSVVMCALKLYVNDHYPNGNCNVLRKTVKNKEFLIACIEKHSYDNGECWNGLWKSKWIFQVNPFLTQVTGRIFVQAHYFRCVNLHVEVSKDLKESLEVVNQAQLALSFARLVEEQENKFQAAVIEELQELSNEALRKILRRDLPVTRTLIDWQRILSDLNLVMYPKLGYVIYSRSVLCNWII</sequence>
<organism>
    <name type="scientific">Rattus norvegicus</name>
    <name type="common">Rat</name>
    <dbReference type="NCBI Taxonomy" id="10116"/>
    <lineage>
        <taxon>Eukaryota</taxon>
        <taxon>Metazoa</taxon>
        <taxon>Chordata</taxon>
        <taxon>Craniata</taxon>
        <taxon>Vertebrata</taxon>
        <taxon>Euteleostomi</taxon>
        <taxon>Mammalia</taxon>
        <taxon>Eutheria</taxon>
        <taxon>Euarchontoglires</taxon>
        <taxon>Glires</taxon>
        <taxon>Rodentia</taxon>
        <taxon>Myomorpha</taxon>
        <taxon>Muroidea</taxon>
        <taxon>Muridae</taxon>
        <taxon>Murinae</taxon>
        <taxon>Rattus</taxon>
    </lineage>
</organism>
<comment type="function">
    <text>F-actin-capping proteins bind in a Ca(2+)-independent manner to the fast growing ends of actin filaments (barbed end) thereby blocking the exchange of subunits at these ends. Unlike other capping proteins (such as gelsolin and severin), these proteins do not sever actin filaments. May play a role in the morphogenesis of spermatid.</text>
</comment>
<comment type="subunit">
    <text evidence="1">Component of the F-actin capping complex, composed of a heterodimer of an alpha and a beta subunit. Component of the WASH complex, composed of F-actin-capping protein subunit alpha (CAPZA1, CAPZA2 or CAPZA3), F-actin-capping protein subunit beta (CAPZB), WASHC1, WASHC2, WASHC3, WASHC4 and WASHC5 (By similarity).</text>
</comment>
<comment type="subcellular location">
    <subcellularLocation>
        <location evidence="2">Cytoplasm</location>
        <location evidence="2">Cytoskeleton</location>
    </subcellularLocation>
</comment>
<comment type="tissue specificity">
    <text>Exclusively expressed in the testis.</text>
</comment>
<comment type="similarity">
    <text evidence="3">Belongs to the F-actin-capping protein alpha subunit family.</text>
</comment>
<keyword id="KW-0117">Actin capping</keyword>
<keyword id="KW-0009">Actin-binding</keyword>
<keyword id="KW-0963">Cytoplasm</keyword>
<keyword id="KW-0206">Cytoskeleton</keyword>
<keyword id="KW-0597">Phosphoprotein</keyword>
<keyword id="KW-1185">Reference proteome</keyword>
<name>CAZA3_RAT</name>
<reference key="1">
    <citation type="journal article" date="1998" name="Mol. Reprod. Dev.">
        <title>Expression of a testis-specific putative actin-capping protein associated with the developing acrosome during rat spermiogenesis.</title>
        <authorList>
            <person name="Hurst S."/>
            <person name="Howes E.A."/>
            <person name="Coadwell J."/>
            <person name="Jones R."/>
        </authorList>
    </citation>
    <scope>NUCLEOTIDE SEQUENCE [MRNA]</scope>
    <source>
        <tissue>Testis</tissue>
    </source>
</reference>
<reference key="2">
    <citation type="journal article" date="2012" name="Nat. Commun.">
        <title>Quantitative maps of protein phosphorylation sites across 14 different rat organs and tissues.</title>
        <authorList>
            <person name="Lundby A."/>
            <person name="Secher A."/>
            <person name="Lage K."/>
            <person name="Nordsborg N.B."/>
            <person name="Dmytriyev A."/>
            <person name="Lundby C."/>
            <person name="Olsen J.V."/>
        </authorList>
    </citation>
    <scope>PHOSPHORYLATION [LARGE SCALE ANALYSIS] AT SER-2 AND SER-290</scope>
    <scope>IDENTIFICATION BY MASS SPECTROMETRY [LARGE SCALE ANALYSIS]</scope>
</reference>